<comment type="function">
    <text evidence="1">Catalyzes the irreversible cleavage of the glycosidic bond in both 5'-methylthioadenosine (MTA) and S-adenosylhomocysteine (SAH/AdoHcy) to adenine and the corresponding thioribose, 5'-methylthioribose and S-ribosylhomocysteine, respectively. Also cleaves 5'-deoxyadenosine, a toxic by-product of radical S-adenosylmethionine (SAM) enzymes, into 5-deoxyribose and adenine.</text>
</comment>
<comment type="catalytic activity">
    <reaction evidence="1">
        <text>S-adenosyl-L-homocysteine + H2O = S-(5-deoxy-D-ribos-5-yl)-L-homocysteine + adenine</text>
        <dbReference type="Rhea" id="RHEA:17805"/>
        <dbReference type="ChEBI" id="CHEBI:15377"/>
        <dbReference type="ChEBI" id="CHEBI:16708"/>
        <dbReference type="ChEBI" id="CHEBI:57856"/>
        <dbReference type="ChEBI" id="CHEBI:58195"/>
        <dbReference type="EC" id="3.2.2.9"/>
    </reaction>
</comment>
<comment type="catalytic activity">
    <reaction evidence="1">
        <text>S-methyl-5'-thioadenosine + H2O = 5-(methylsulfanyl)-D-ribose + adenine</text>
        <dbReference type="Rhea" id="RHEA:13617"/>
        <dbReference type="ChEBI" id="CHEBI:15377"/>
        <dbReference type="ChEBI" id="CHEBI:16708"/>
        <dbReference type="ChEBI" id="CHEBI:17509"/>
        <dbReference type="ChEBI" id="CHEBI:78440"/>
        <dbReference type="EC" id="3.2.2.9"/>
    </reaction>
</comment>
<comment type="catalytic activity">
    <reaction evidence="1">
        <text>5'-deoxyadenosine + H2O = 5-deoxy-D-ribose + adenine</text>
        <dbReference type="Rhea" id="RHEA:29859"/>
        <dbReference type="ChEBI" id="CHEBI:15377"/>
        <dbReference type="ChEBI" id="CHEBI:16708"/>
        <dbReference type="ChEBI" id="CHEBI:17319"/>
        <dbReference type="ChEBI" id="CHEBI:149540"/>
        <dbReference type="EC" id="3.2.2.9"/>
    </reaction>
    <physiologicalReaction direction="left-to-right" evidence="1">
        <dbReference type="Rhea" id="RHEA:29860"/>
    </physiologicalReaction>
</comment>
<comment type="pathway">
    <text evidence="1">Amino-acid biosynthesis; L-methionine biosynthesis via salvage pathway; S-methyl-5-thio-alpha-D-ribose 1-phosphate from S-methyl-5'-thioadenosine (hydrolase route): step 1/2.</text>
</comment>
<comment type="similarity">
    <text evidence="1">Belongs to the PNP/UDP phosphorylase family. MtnN subfamily.</text>
</comment>
<proteinExistence type="inferred from homology"/>
<keyword id="KW-0028">Amino-acid biosynthesis</keyword>
<keyword id="KW-0378">Hydrolase</keyword>
<keyword id="KW-0486">Methionine biosynthesis</keyword>
<organism>
    <name type="scientific">Bacillus cereus (strain AH187)</name>
    <dbReference type="NCBI Taxonomy" id="405534"/>
    <lineage>
        <taxon>Bacteria</taxon>
        <taxon>Bacillati</taxon>
        <taxon>Bacillota</taxon>
        <taxon>Bacilli</taxon>
        <taxon>Bacillales</taxon>
        <taxon>Bacillaceae</taxon>
        <taxon>Bacillus</taxon>
        <taxon>Bacillus cereus group</taxon>
    </lineage>
</organism>
<feature type="chain" id="PRO_1000187413" description="5'-methylthioadenosine/S-adenosylhomocysteine nucleosidase">
    <location>
        <begin position="1"/>
        <end position="231"/>
    </location>
</feature>
<feature type="active site" description="Proton acceptor" evidence="1">
    <location>
        <position position="12"/>
    </location>
</feature>
<feature type="active site" description="Proton donor" evidence="1">
    <location>
        <position position="198"/>
    </location>
</feature>
<feature type="binding site" evidence="1">
    <location>
        <position position="78"/>
    </location>
    <ligand>
        <name>substrate</name>
    </ligand>
</feature>
<feature type="binding site" evidence="1">
    <location>
        <position position="153"/>
    </location>
    <ligand>
        <name>substrate</name>
    </ligand>
</feature>
<feature type="binding site" evidence="1">
    <location>
        <begin position="174"/>
        <end position="175"/>
    </location>
    <ligand>
        <name>substrate</name>
    </ligand>
</feature>
<gene>
    <name evidence="1" type="primary">mtnN</name>
    <name type="ordered locus">BCAH187_A4507</name>
</gene>
<accession>B7HQD2</accession>
<protein>
    <recommendedName>
        <fullName evidence="1">5'-methylthioadenosine/S-adenosylhomocysteine nucleosidase</fullName>
        <shortName evidence="1">MTA/SAH nucleosidase</shortName>
        <shortName evidence="1">MTAN</shortName>
        <ecNumber evidence="1">3.2.2.9</ecNumber>
    </recommendedName>
    <alternativeName>
        <fullName evidence="1">5'-deoxyadenosine nucleosidase</fullName>
        <shortName evidence="1">DOA nucleosidase</shortName>
        <shortName evidence="1">dAdo nucleosidase</shortName>
    </alternativeName>
    <alternativeName>
        <fullName evidence="1">5'-methylthioadenosine nucleosidase</fullName>
        <shortName evidence="1">MTA nucleosidase</shortName>
    </alternativeName>
    <alternativeName>
        <fullName evidence="1">S-adenosylhomocysteine nucleosidase</fullName>
        <shortName evidence="1">AdoHcy nucleosidase</shortName>
        <shortName evidence="1">SAH nucleosidase</shortName>
        <shortName evidence="1">SRH nucleosidase</shortName>
    </alternativeName>
</protein>
<evidence type="ECO:0000255" key="1">
    <source>
        <dbReference type="HAMAP-Rule" id="MF_01684"/>
    </source>
</evidence>
<name>MTNN_BACC7</name>
<sequence length="231" mass="25255">MRIAVIGAMEEEVRILRDKLEQAETETVAGCEFTKGQLAGHEVILLKSGIGKVNAAMSTTILLERYKPEKVINTGSAGGFHHSLNVGDVVISTEVRHHDVDVTAFNYEYGQVPGMPPGFKADEALVALAEKCMQAEENIQVVKGMIATGDSFMSDPNRVAAIRDKFENLYAVEMEAAAVAQVCHQYEVPFVIIRALSDIAGKESNVSFDQFLDQAALHSTNFIVKVLEELK</sequence>
<dbReference type="EC" id="3.2.2.9" evidence="1"/>
<dbReference type="EMBL" id="CP001177">
    <property type="protein sequence ID" value="ACJ82273.1"/>
    <property type="molecule type" value="Genomic_DNA"/>
</dbReference>
<dbReference type="SMR" id="B7HQD2"/>
<dbReference type="KEGG" id="bcr:BCAH187_A4507"/>
<dbReference type="HOGENOM" id="CLU_031248_2_2_9"/>
<dbReference type="UniPathway" id="UPA00904">
    <property type="reaction ID" value="UER00871"/>
</dbReference>
<dbReference type="Proteomes" id="UP000002214">
    <property type="component" value="Chromosome"/>
</dbReference>
<dbReference type="GO" id="GO:0005829">
    <property type="term" value="C:cytosol"/>
    <property type="evidence" value="ECO:0007669"/>
    <property type="project" value="TreeGrafter"/>
</dbReference>
<dbReference type="GO" id="GO:0008782">
    <property type="term" value="F:adenosylhomocysteine nucleosidase activity"/>
    <property type="evidence" value="ECO:0007669"/>
    <property type="project" value="UniProtKB-UniRule"/>
</dbReference>
<dbReference type="GO" id="GO:0008930">
    <property type="term" value="F:methylthioadenosine nucleosidase activity"/>
    <property type="evidence" value="ECO:0007669"/>
    <property type="project" value="UniProtKB-UniRule"/>
</dbReference>
<dbReference type="GO" id="GO:0019509">
    <property type="term" value="P:L-methionine salvage from methylthioadenosine"/>
    <property type="evidence" value="ECO:0007669"/>
    <property type="project" value="UniProtKB-UniRule"/>
</dbReference>
<dbReference type="GO" id="GO:0019284">
    <property type="term" value="P:L-methionine salvage from S-adenosylmethionine"/>
    <property type="evidence" value="ECO:0007669"/>
    <property type="project" value="TreeGrafter"/>
</dbReference>
<dbReference type="GO" id="GO:0009164">
    <property type="term" value="P:nucleoside catabolic process"/>
    <property type="evidence" value="ECO:0007669"/>
    <property type="project" value="InterPro"/>
</dbReference>
<dbReference type="CDD" id="cd09008">
    <property type="entry name" value="MTAN"/>
    <property type="match status" value="1"/>
</dbReference>
<dbReference type="FunFam" id="3.40.50.1580:FF:000001">
    <property type="entry name" value="MTA/SAH nucleosidase family protein"/>
    <property type="match status" value="1"/>
</dbReference>
<dbReference type="Gene3D" id="3.40.50.1580">
    <property type="entry name" value="Nucleoside phosphorylase domain"/>
    <property type="match status" value="1"/>
</dbReference>
<dbReference type="HAMAP" id="MF_01684">
    <property type="entry name" value="Salvage_MtnN"/>
    <property type="match status" value="1"/>
</dbReference>
<dbReference type="InterPro" id="IPR010049">
    <property type="entry name" value="MTA_SAH_Nsdase"/>
</dbReference>
<dbReference type="InterPro" id="IPR000845">
    <property type="entry name" value="Nucleoside_phosphorylase_d"/>
</dbReference>
<dbReference type="InterPro" id="IPR035994">
    <property type="entry name" value="Nucleoside_phosphorylase_sf"/>
</dbReference>
<dbReference type="NCBIfam" id="TIGR01704">
    <property type="entry name" value="MTA_SAH-Nsdase"/>
    <property type="match status" value="1"/>
</dbReference>
<dbReference type="NCBIfam" id="NF004079">
    <property type="entry name" value="PRK05584.1"/>
    <property type="match status" value="1"/>
</dbReference>
<dbReference type="PANTHER" id="PTHR46832">
    <property type="entry name" value="5'-METHYLTHIOADENOSINE/S-ADENOSYLHOMOCYSTEINE NUCLEOSIDASE"/>
    <property type="match status" value="1"/>
</dbReference>
<dbReference type="PANTHER" id="PTHR46832:SF1">
    <property type="entry name" value="5'-METHYLTHIOADENOSINE_S-ADENOSYLHOMOCYSTEINE NUCLEOSIDASE"/>
    <property type="match status" value="1"/>
</dbReference>
<dbReference type="Pfam" id="PF01048">
    <property type="entry name" value="PNP_UDP_1"/>
    <property type="match status" value="1"/>
</dbReference>
<dbReference type="SUPFAM" id="SSF53167">
    <property type="entry name" value="Purine and uridine phosphorylases"/>
    <property type="match status" value="1"/>
</dbReference>
<reference key="1">
    <citation type="submission" date="2008-10" db="EMBL/GenBank/DDBJ databases">
        <title>Genome sequence of Bacillus cereus AH187.</title>
        <authorList>
            <person name="Dodson R.J."/>
            <person name="Durkin A.S."/>
            <person name="Rosovitz M.J."/>
            <person name="Rasko D.A."/>
            <person name="Kolsto A.B."/>
            <person name="Okstad O.A."/>
            <person name="Ravel J."/>
            <person name="Sutton G."/>
        </authorList>
    </citation>
    <scope>NUCLEOTIDE SEQUENCE [LARGE SCALE GENOMIC DNA]</scope>
    <source>
        <strain>AH187</strain>
    </source>
</reference>